<gene>
    <name type="primary">AL1</name>
    <name type="ordered locus">At5g05610</name>
    <name type="ORF">MOP10.15</name>
</gene>
<proteinExistence type="evidence at protein level"/>
<reference key="1">
    <citation type="journal article" date="1997" name="DNA Res.">
        <title>Structural analysis of Arabidopsis thaliana chromosome 5. I. Sequence features of the 1.6 Mb regions covered by twenty physically assigned P1 clones.</title>
        <authorList>
            <person name="Sato S."/>
            <person name="Kotani H."/>
            <person name="Nakamura Y."/>
            <person name="Kaneko T."/>
            <person name="Asamizu E."/>
            <person name="Fukami M."/>
            <person name="Miyajima N."/>
            <person name="Tabata S."/>
        </authorList>
    </citation>
    <scope>NUCLEOTIDE SEQUENCE [LARGE SCALE GENOMIC DNA]</scope>
    <source>
        <strain>cv. Columbia</strain>
    </source>
</reference>
<reference key="2">
    <citation type="journal article" date="2017" name="Plant J.">
        <title>Araport11: a complete reannotation of the Arabidopsis thaliana reference genome.</title>
        <authorList>
            <person name="Cheng C.Y."/>
            <person name="Krishnakumar V."/>
            <person name="Chan A.P."/>
            <person name="Thibaud-Nissen F."/>
            <person name="Schobel S."/>
            <person name="Town C.D."/>
        </authorList>
    </citation>
    <scope>GENOME REANNOTATION</scope>
    <source>
        <strain>cv. Columbia</strain>
    </source>
</reference>
<reference key="3">
    <citation type="submission" date="2004-09" db="EMBL/GenBank/DDBJ databases">
        <title>Large-scale analysis of RIKEN Arabidopsis full-length (RAFL) cDNAs.</title>
        <authorList>
            <person name="Totoki Y."/>
            <person name="Seki M."/>
            <person name="Ishida J."/>
            <person name="Nakajima M."/>
            <person name="Enju A."/>
            <person name="Kamiya A."/>
            <person name="Narusaka M."/>
            <person name="Shin-i T."/>
            <person name="Nakagawa M."/>
            <person name="Sakamoto N."/>
            <person name="Oishi K."/>
            <person name="Kohara Y."/>
            <person name="Kobayashi M."/>
            <person name="Toyoda A."/>
            <person name="Sakaki Y."/>
            <person name="Sakurai T."/>
            <person name="Iida K."/>
            <person name="Akiyama K."/>
            <person name="Satou M."/>
            <person name="Toyoda T."/>
            <person name="Konagaya A."/>
            <person name="Carninci P."/>
            <person name="Kawai J."/>
            <person name="Hayashizaki Y."/>
            <person name="Shinozaki K."/>
        </authorList>
    </citation>
    <scope>NUCLEOTIDE SEQUENCE [LARGE SCALE MRNA]</scope>
    <source>
        <strain>cv. Columbia</strain>
    </source>
</reference>
<reference key="4">
    <citation type="submission" date="2006-02" db="EMBL/GenBank/DDBJ databases">
        <title>Arabidopsis ORF clones.</title>
        <authorList>
            <person name="Shinn P."/>
            <person name="Chen H."/>
            <person name="Kim C.J."/>
            <person name="Ecker J.R."/>
        </authorList>
    </citation>
    <scope>NUCLEOTIDE SEQUENCE [LARGE SCALE MRNA]</scope>
    <source>
        <strain>cv. Columbia</strain>
    </source>
</reference>
<reference key="5">
    <citation type="submission" date="2002-03" db="EMBL/GenBank/DDBJ databases">
        <title>Full-length cDNA from Arabidopsis thaliana.</title>
        <authorList>
            <person name="Brover V.V."/>
            <person name="Troukhan M.E."/>
            <person name="Alexandrov N.A."/>
            <person name="Lu Y.-P."/>
            <person name="Flavell R.B."/>
            <person name="Feldmann K.A."/>
        </authorList>
    </citation>
    <scope>NUCLEOTIDE SEQUENCE [LARGE SCALE MRNA]</scope>
</reference>
<reference key="6">
    <citation type="journal article" date="2009" name="Plant J.">
        <title>Arabidopsis ING and Alfin1-like protein families localize to the nucleus and bind to H3K4me3/2 via plant homeodomain fingers.</title>
        <authorList>
            <person name="Lee W.Y."/>
            <person name="Lee D."/>
            <person name="Chung W.I."/>
            <person name="Kwon C.S."/>
        </authorList>
    </citation>
    <scope>GENE FAMILY</scope>
    <scope>DOMAIN PHD-TYPE ZINC-FINGER</scope>
    <scope>SUBCELLULAR LOCATION</scope>
    <scope>INTERACTION WITH HISTONES H3K4ME3 AND H3K4ME2</scope>
    <scope>TISSUE SPECIFICITY</scope>
</reference>
<reference key="7">
    <citation type="journal article" date="2012" name="Mol. Cell. Proteomics">
        <title>Comparative large-scale characterisation of plant vs. mammal proteins reveals similar and idiosyncratic N-alpha acetylation features.</title>
        <authorList>
            <person name="Bienvenut W.V."/>
            <person name="Sumpton D."/>
            <person name="Martinez A."/>
            <person name="Lilla S."/>
            <person name="Espagne C."/>
            <person name="Meinnel T."/>
            <person name="Giglione C."/>
        </authorList>
    </citation>
    <scope>ACETYLATION [LARGE SCALE ANALYSIS] AT ALA-2</scope>
    <scope>CLEAVAGE OF INITIATOR METHIONINE [LARGE SCALE ANALYSIS]</scope>
    <scope>IDENTIFICATION BY MASS SPECTROMETRY [LARGE SCALE ANALYSIS]</scope>
</reference>
<comment type="function">
    <text evidence="1">Histone-binding component that specifically recognizes H3 tails trimethylated on 'Lys-4' (H3K4me3), which mark transcription start sites of virtually all active genes.</text>
</comment>
<comment type="subunit">
    <text evidence="4">Interacts with H3K4me3 and to a lesser extent with H3K4me2.</text>
</comment>
<comment type="subcellular location">
    <subcellularLocation>
        <location evidence="4">Nucleus</location>
    </subcellularLocation>
</comment>
<comment type="tissue specificity">
    <text evidence="4">Ubiquitously expressed.</text>
</comment>
<comment type="domain">
    <text evidence="4">The PHD-type zinc finger mediates the binding to H3K4me3.</text>
</comment>
<comment type="similarity">
    <text evidence="5">Belongs to the Alfin family.</text>
</comment>
<organism>
    <name type="scientific">Arabidopsis thaliana</name>
    <name type="common">Mouse-ear cress</name>
    <dbReference type="NCBI Taxonomy" id="3702"/>
    <lineage>
        <taxon>Eukaryota</taxon>
        <taxon>Viridiplantae</taxon>
        <taxon>Streptophyta</taxon>
        <taxon>Embryophyta</taxon>
        <taxon>Tracheophyta</taxon>
        <taxon>Spermatophyta</taxon>
        <taxon>Magnoliopsida</taxon>
        <taxon>eudicotyledons</taxon>
        <taxon>Gunneridae</taxon>
        <taxon>Pentapetalae</taxon>
        <taxon>rosids</taxon>
        <taxon>malvids</taxon>
        <taxon>Brassicales</taxon>
        <taxon>Brassicaceae</taxon>
        <taxon>Camelineae</taxon>
        <taxon>Arabidopsis</taxon>
    </lineage>
</organism>
<name>ALFL1_ARATH</name>
<evidence type="ECO:0000250" key="1"/>
<evidence type="ECO:0000255" key="2">
    <source>
        <dbReference type="PROSITE-ProRule" id="PRU00146"/>
    </source>
</evidence>
<evidence type="ECO:0000256" key="3">
    <source>
        <dbReference type="SAM" id="MobiDB-lite"/>
    </source>
</evidence>
<evidence type="ECO:0000269" key="4">
    <source>
    </source>
</evidence>
<evidence type="ECO:0000305" key="5"/>
<evidence type="ECO:0007744" key="6">
    <source>
    </source>
</evidence>
<evidence type="ECO:0007829" key="7">
    <source>
        <dbReference type="PDB" id="5Y20"/>
    </source>
</evidence>
<sequence length="241" mass="27223">MAAESSNPRTVEEIFKDFSGRRSGFLRALSVDVDKFYSLCDPEMENLCLYGHPNGTWEVNLPAEEVPPELPEPALGINFARDGMQRKDWLSLVAVHSDCWLLSVSSYFGARLNRNERKRLFSLINDLPTLFEVVTGRKPIKDGKPSMDLGSKSRNGVKRSIEGQTKSTPKLMEESYEDEDDEHGDTLCGSCGGNYTNDEFWICCDVCERWYHGKCVKITPAKAESIKQYKCPSCCTKKGRQ</sequence>
<accession>Q9FFF5</accession>
<dbReference type="EMBL" id="AB005241">
    <property type="protein sequence ID" value="BAB11550.1"/>
    <property type="molecule type" value="Genomic_DNA"/>
</dbReference>
<dbReference type="EMBL" id="CP002688">
    <property type="protein sequence ID" value="AED90898.1"/>
    <property type="molecule type" value="Genomic_DNA"/>
</dbReference>
<dbReference type="EMBL" id="CP002688">
    <property type="protein sequence ID" value="AED90899.1"/>
    <property type="molecule type" value="Genomic_DNA"/>
</dbReference>
<dbReference type="EMBL" id="AK176462">
    <property type="protein sequence ID" value="BAD44225.1"/>
    <property type="molecule type" value="mRNA"/>
</dbReference>
<dbReference type="EMBL" id="AK176806">
    <property type="protein sequence ID" value="BAD44569.1"/>
    <property type="molecule type" value="mRNA"/>
</dbReference>
<dbReference type="EMBL" id="BT024471">
    <property type="protein sequence ID" value="ABD19652.1"/>
    <property type="molecule type" value="mRNA"/>
</dbReference>
<dbReference type="EMBL" id="AY084560">
    <property type="protein sequence ID" value="AAM61127.1"/>
    <property type="molecule type" value="mRNA"/>
</dbReference>
<dbReference type="RefSeq" id="NP_196180.1">
    <property type="nucleotide sequence ID" value="NM_120643.2"/>
</dbReference>
<dbReference type="RefSeq" id="NP_850775.1">
    <property type="nucleotide sequence ID" value="NM_180444.3"/>
</dbReference>
<dbReference type="PDB" id="5Y20">
    <property type="method" value="X-ray"/>
    <property type="resolution" value="2.41 A"/>
    <property type="chains" value="A=185-236"/>
</dbReference>
<dbReference type="PDBsum" id="5Y20"/>
<dbReference type="SMR" id="Q9FFF5"/>
<dbReference type="BioGRID" id="15723">
    <property type="interactions" value="6"/>
</dbReference>
<dbReference type="FunCoup" id="Q9FFF5">
    <property type="interactions" value="2244"/>
</dbReference>
<dbReference type="STRING" id="3702.Q9FFF5"/>
<dbReference type="iPTMnet" id="Q9FFF5"/>
<dbReference type="PaxDb" id="3702-AT5G05610.1"/>
<dbReference type="ProteomicsDB" id="244937"/>
<dbReference type="EnsemblPlants" id="AT5G05610.1">
    <property type="protein sequence ID" value="AT5G05610.1"/>
    <property type="gene ID" value="AT5G05610"/>
</dbReference>
<dbReference type="EnsemblPlants" id="AT5G05610.2">
    <property type="protein sequence ID" value="AT5G05610.2"/>
    <property type="gene ID" value="AT5G05610"/>
</dbReference>
<dbReference type="GeneID" id="830444"/>
<dbReference type="Gramene" id="AT5G05610.1">
    <property type="protein sequence ID" value="AT5G05610.1"/>
    <property type="gene ID" value="AT5G05610"/>
</dbReference>
<dbReference type="Gramene" id="AT5G05610.2">
    <property type="protein sequence ID" value="AT5G05610.2"/>
    <property type="gene ID" value="AT5G05610"/>
</dbReference>
<dbReference type="KEGG" id="ath:AT5G05610"/>
<dbReference type="Araport" id="AT5G05610"/>
<dbReference type="TAIR" id="AT5G05610">
    <property type="gene designation" value="AL1"/>
</dbReference>
<dbReference type="eggNOG" id="KOG1632">
    <property type="taxonomic scope" value="Eukaryota"/>
</dbReference>
<dbReference type="HOGENOM" id="CLU_058315_1_0_1"/>
<dbReference type="InParanoid" id="Q9FFF5"/>
<dbReference type="OMA" id="KFYSLCD"/>
<dbReference type="OrthoDB" id="436852at2759"/>
<dbReference type="PhylomeDB" id="Q9FFF5"/>
<dbReference type="PRO" id="PR:Q9FFF5"/>
<dbReference type="Proteomes" id="UP000006548">
    <property type="component" value="Chromosome 5"/>
</dbReference>
<dbReference type="ExpressionAtlas" id="Q9FFF5">
    <property type="expression patterns" value="baseline and differential"/>
</dbReference>
<dbReference type="GO" id="GO:0005634">
    <property type="term" value="C:nucleus"/>
    <property type="evidence" value="ECO:0000314"/>
    <property type="project" value="TAIR"/>
</dbReference>
<dbReference type="GO" id="GO:0035064">
    <property type="term" value="F:methylated histone binding"/>
    <property type="evidence" value="ECO:0000314"/>
    <property type="project" value="TAIR"/>
</dbReference>
<dbReference type="GO" id="GO:0000976">
    <property type="term" value="F:transcription cis-regulatory region binding"/>
    <property type="evidence" value="ECO:0000353"/>
    <property type="project" value="TAIR"/>
</dbReference>
<dbReference type="GO" id="GO:0008270">
    <property type="term" value="F:zinc ion binding"/>
    <property type="evidence" value="ECO:0007669"/>
    <property type="project" value="UniProtKB-KW"/>
</dbReference>
<dbReference type="GO" id="GO:0006325">
    <property type="term" value="P:chromatin organization"/>
    <property type="evidence" value="ECO:0007669"/>
    <property type="project" value="UniProtKB-KW"/>
</dbReference>
<dbReference type="GO" id="GO:0006355">
    <property type="term" value="P:regulation of DNA-templated transcription"/>
    <property type="evidence" value="ECO:0007669"/>
    <property type="project" value="InterPro"/>
</dbReference>
<dbReference type="CDD" id="cd15613">
    <property type="entry name" value="PHD_AL_plant"/>
    <property type="match status" value="1"/>
</dbReference>
<dbReference type="FunFam" id="3.30.40.10:FF:000306">
    <property type="entry name" value="PHD finger alfin-like protein"/>
    <property type="match status" value="1"/>
</dbReference>
<dbReference type="Gene3D" id="3.30.40.10">
    <property type="entry name" value="Zinc/RING finger domain, C3HC4 (zinc finger)"/>
    <property type="match status" value="1"/>
</dbReference>
<dbReference type="InterPro" id="IPR045104">
    <property type="entry name" value="Alfin"/>
</dbReference>
<dbReference type="InterPro" id="IPR021998">
    <property type="entry name" value="Alfin_N"/>
</dbReference>
<dbReference type="InterPro" id="IPR044104">
    <property type="entry name" value="PHD_AL_plant"/>
</dbReference>
<dbReference type="InterPro" id="IPR019786">
    <property type="entry name" value="Zinc_finger_PHD-type_CS"/>
</dbReference>
<dbReference type="InterPro" id="IPR011011">
    <property type="entry name" value="Znf_FYVE_PHD"/>
</dbReference>
<dbReference type="InterPro" id="IPR001965">
    <property type="entry name" value="Znf_PHD"/>
</dbReference>
<dbReference type="InterPro" id="IPR019787">
    <property type="entry name" value="Znf_PHD-finger"/>
</dbReference>
<dbReference type="InterPro" id="IPR013083">
    <property type="entry name" value="Znf_RING/FYVE/PHD"/>
</dbReference>
<dbReference type="PANTHER" id="PTHR12321">
    <property type="entry name" value="CPG BINDING PROTEIN"/>
    <property type="match status" value="1"/>
</dbReference>
<dbReference type="PANTHER" id="PTHR12321:SF119">
    <property type="entry name" value="PHD FINGER PROTEIN ALFIN-LIKE 1"/>
    <property type="match status" value="1"/>
</dbReference>
<dbReference type="Pfam" id="PF12165">
    <property type="entry name" value="Alfin"/>
    <property type="match status" value="1"/>
</dbReference>
<dbReference type="Pfam" id="PF00628">
    <property type="entry name" value="PHD"/>
    <property type="match status" value="1"/>
</dbReference>
<dbReference type="SMART" id="SM00249">
    <property type="entry name" value="PHD"/>
    <property type="match status" value="1"/>
</dbReference>
<dbReference type="SUPFAM" id="SSF57903">
    <property type="entry name" value="FYVE/PHD zinc finger"/>
    <property type="match status" value="1"/>
</dbReference>
<dbReference type="PROSITE" id="PS01359">
    <property type="entry name" value="ZF_PHD_1"/>
    <property type="match status" value="1"/>
</dbReference>
<dbReference type="PROSITE" id="PS50016">
    <property type="entry name" value="ZF_PHD_2"/>
    <property type="match status" value="1"/>
</dbReference>
<feature type="initiator methionine" description="Removed" evidence="6">
    <location>
        <position position="1"/>
    </location>
</feature>
<feature type="chain" id="PRO_0000412929" description="PHD finger protein ALFIN-LIKE 1">
    <location>
        <begin position="2"/>
        <end position="241"/>
    </location>
</feature>
<feature type="zinc finger region" description="PHD-type" evidence="2">
    <location>
        <begin position="185"/>
        <end position="237"/>
    </location>
</feature>
<feature type="region of interest" description="Disordered" evidence="3">
    <location>
        <begin position="142"/>
        <end position="182"/>
    </location>
</feature>
<feature type="site" description="Histone H3K4me3 binding" evidence="1">
    <location>
        <position position="195"/>
    </location>
</feature>
<feature type="site" description="Histone H3K4me3 binding" evidence="1">
    <location>
        <position position="201"/>
    </location>
</feature>
<feature type="site" description="Histone H3K4me3 binding" evidence="1">
    <location>
        <position position="205"/>
    </location>
</feature>
<feature type="site" description="Histone H3K4me3 binding" evidence="1">
    <location>
        <position position="210"/>
    </location>
</feature>
<feature type="modified residue" description="N-acetylalanine" evidence="6">
    <location>
        <position position="2"/>
    </location>
</feature>
<feature type="turn" evidence="7">
    <location>
        <begin position="189"/>
        <end position="191"/>
    </location>
</feature>
<feature type="strand" evidence="7">
    <location>
        <begin position="201"/>
        <end position="203"/>
    </location>
</feature>
<feature type="turn" evidence="7">
    <location>
        <begin position="205"/>
        <end position="207"/>
    </location>
</feature>
<feature type="strand" evidence="7">
    <location>
        <begin position="210"/>
        <end position="212"/>
    </location>
</feature>
<feature type="helix" evidence="7">
    <location>
        <begin position="213"/>
        <end position="216"/>
    </location>
</feature>
<feature type="helix" evidence="7">
    <location>
        <begin position="220"/>
        <end position="224"/>
    </location>
</feature>
<feature type="turn" evidence="7">
    <location>
        <begin position="232"/>
        <end position="235"/>
    </location>
</feature>
<protein>
    <recommendedName>
        <fullName>PHD finger protein ALFIN-LIKE 1</fullName>
        <shortName>Protein AL1</shortName>
    </recommendedName>
</protein>
<keyword id="KW-0002">3D-structure</keyword>
<keyword id="KW-0007">Acetylation</keyword>
<keyword id="KW-0156">Chromatin regulator</keyword>
<keyword id="KW-0479">Metal-binding</keyword>
<keyword id="KW-0539">Nucleus</keyword>
<keyword id="KW-1185">Reference proteome</keyword>
<keyword id="KW-0804">Transcription</keyword>
<keyword id="KW-0805">Transcription regulation</keyword>
<keyword id="KW-0862">Zinc</keyword>
<keyword id="KW-0863">Zinc-finger</keyword>